<proteinExistence type="inferred from homology"/>
<name>SYL_HELHP</name>
<accession>Q7VIY7</accession>
<organism>
    <name type="scientific">Helicobacter hepaticus (strain ATCC 51449 / 3B1)</name>
    <dbReference type="NCBI Taxonomy" id="235279"/>
    <lineage>
        <taxon>Bacteria</taxon>
        <taxon>Pseudomonadati</taxon>
        <taxon>Campylobacterota</taxon>
        <taxon>Epsilonproteobacteria</taxon>
        <taxon>Campylobacterales</taxon>
        <taxon>Helicobacteraceae</taxon>
        <taxon>Helicobacter</taxon>
    </lineage>
</organism>
<evidence type="ECO:0000255" key="1">
    <source>
        <dbReference type="HAMAP-Rule" id="MF_00049"/>
    </source>
</evidence>
<gene>
    <name evidence="1" type="primary">leuS</name>
    <name type="ordered locus">HH_0465</name>
</gene>
<dbReference type="EC" id="6.1.1.4" evidence="1"/>
<dbReference type="EMBL" id="AE017125">
    <property type="protein sequence ID" value="AAP77062.1"/>
    <property type="molecule type" value="Genomic_DNA"/>
</dbReference>
<dbReference type="RefSeq" id="WP_011115307.1">
    <property type="nucleotide sequence ID" value="NC_004917.1"/>
</dbReference>
<dbReference type="SMR" id="Q7VIY7"/>
<dbReference type="STRING" id="235279.HH_0465"/>
<dbReference type="KEGG" id="hhe:HH_0465"/>
<dbReference type="eggNOG" id="COG0495">
    <property type="taxonomic scope" value="Bacteria"/>
</dbReference>
<dbReference type="HOGENOM" id="CLU_004427_0_0_7"/>
<dbReference type="OrthoDB" id="9810365at2"/>
<dbReference type="Proteomes" id="UP000002495">
    <property type="component" value="Chromosome"/>
</dbReference>
<dbReference type="GO" id="GO:0005829">
    <property type="term" value="C:cytosol"/>
    <property type="evidence" value="ECO:0007669"/>
    <property type="project" value="TreeGrafter"/>
</dbReference>
<dbReference type="GO" id="GO:0002161">
    <property type="term" value="F:aminoacyl-tRNA deacylase activity"/>
    <property type="evidence" value="ECO:0007669"/>
    <property type="project" value="InterPro"/>
</dbReference>
<dbReference type="GO" id="GO:0005524">
    <property type="term" value="F:ATP binding"/>
    <property type="evidence" value="ECO:0007669"/>
    <property type="project" value="UniProtKB-UniRule"/>
</dbReference>
<dbReference type="GO" id="GO:0004823">
    <property type="term" value="F:leucine-tRNA ligase activity"/>
    <property type="evidence" value="ECO:0007669"/>
    <property type="project" value="UniProtKB-UniRule"/>
</dbReference>
<dbReference type="GO" id="GO:0006429">
    <property type="term" value="P:leucyl-tRNA aminoacylation"/>
    <property type="evidence" value="ECO:0007669"/>
    <property type="project" value="UniProtKB-UniRule"/>
</dbReference>
<dbReference type="CDD" id="cd00812">
    <property type="entry name" value="LeuRS_core"/>
    <property type="match status" value="1"/>
</dbReference>
<dbReference type="FunFam" id="1.10.730.10:FF:000002">
    <property type="entry name" value="Leucine--tRNA ligase"/>
    <property type="match status" value="1"/>
</dbReference>
<dbReference type="Gene3D" id="3.10.20.590">
    <property type="match status" value="1"/>
</dbReference>
<dbReference type="Gene3D" id="3.40.50.620">
    <property type="entry name" value="HUPs"/>
    <property type="match status" value="2"/>
</dbReference>
<dbReference type="Gene3D" id="1.10.730.10">
    <property type="entry name" value="Isoleucyl-tRNA Synthetase, Domain 1"/>
    <property type="match status" value="1"/>
</dbReference>
<dbReference type="HAMAP" id="MF_00049_B">
    <property type="entry name" value="Leu_tRNA_synth_B"/>
    <property type="match status" value="1"/>
</dbReference>
<dbReference type="InterPro" id="IPR001412">
    <property type="entry name" value="aa-tRNA-synth_I_CS"/>
</dbReference>
<dbReference type="InterPro" id="IPR002302">
    <property type="entry name" value="Leu-tRNA-ligase"/>
</dbReference>
<dbReference type="InterPro" id="IPR025709">
    <property type="entry name" value="Leu_tRNA-synth_edit"/>
</dbReference>
<dbReference type="InterPro" id="IPR015413">
    <property type="entry name" value="Methionyl/Leucyl_tRNA_Synth"/>
</dbReference>
<dbReference type="InterPro" id="IPR014729">
    <property type="entry name" value="Rossmann-like_a/b/a_fold"/>
</dbReference>
<dbReference type="InterPro" id="IPR009080">
    <property type="entry name" value="tRNAsynth_Ia_anticodon-bd"/>
</dbReference>
<dbReference type="InterPro" id="IPR009008">
    <property type="entry name" value="Val/Leu/Ile-tRNA-synth_edit"/>
</dbReference>
<dbReference type="NCBIfam" id="TIGR00396">
    <property type="entry name" value="leuS_bact"/>
    <property type="match status" value="1"/>
</dbReference>
<dbReference type="PANTHER" id="PTHR43740:SF2">
    <property type="entry name" value="LEUCINE--TRNA LIGASE, MITOCHONDRIAL"/>
    <property type="match status" value="1"/>
</dbReference>
<dbReference type="PANTHER" id="PTHR43740">
    <property type="entry name" value="LEUCYL-TRNA SYNTHETASE"/>
    <property type="match status" value="1"/>
</dbReference>
<dbReference type="Pfam" id="PF13603">
    <property type="entry name" value="tRNA-synt_1_2"/>
    <property type="match status" value="1"/>
</dbReference>
<dbReference type="Pfam" id="PF09334">
    <property type="entry name" value="tRNA-synt_1g"/>
    <property type="match status" value="2"/>
</dbReference>
<dbReference type="PRINTS" id="PR00985">
    <property type="entry name" value="TRNASYNTHLEU"/>
</dbReference>
<dbReference type="SUPFAM" id="SSF47323">
    <property type="entry name" value="Anticodon-binding domain of a subclass of class I aminoacyl-tRNA synthetases"/>
    <property type="match status" value="1"/>
</dbReference>
<dbReference type="SUPFAM" id="SSF52374">
    <property type="entry name" value="Nucleotidylyl transferase"/>
    <property type="match status" value="1"/>
</dbReference>
<dbReference type="SUPFAM" id="SSF50677">
    <property type="entry name" value="ValRS/IleRS/LeuRS editing domain"/>
    <property type="match status" value="1"/>
</dbReference>
<dbReference type="PROSITE" id="PS00178">
    <property type="entry name" value="AA_TRNA_LIGASE_I"/>
    <property type="match status" value="1"/>
</dbReference>
<sequence>MQERKYNPKDIESKWQQFWTEHKSFEPFDIDIATSDSMKKKYILSMFPYPSGAIHMGHVRNYCIGDALARNYRQNGYNVLHPMGWDAFGMPAENAAIKHKTHPKTWTYSNIDTMRKELATLGLSFSKEREFATSDAIYTRFEQEFFIKMWERGLIYRKEAYLNWCPKDKTILANEQVIEGKCWRCDTPVVQKQMFQYYIKITDYADELLECLNKLEGHWPSQVLSMQRNWIGKSKGLSFTFDFSVDSLQKLGNGKVKLEVFTTRPDTIYGVTYCAVAPEHPIVQQLIENKSLDESVIKSIEAIKNTTARARAMSEKVGFDLGVYVIHPLTQEKLPVWVANFVLMDYGSGAVMSVPMHDERDFEFAKTYALPFKCVLTKEIDGEEPTQEICAAYEEGFLINSGEFSGMSSSQAKERIIAHFENASIGKGITNYRLRDWGVSRQRYWGAPIPMVHCQSCGIVPEKIENLPITLPEDVVIDGEGNPLDKHLVWKDCLCPKCGKKAQRESDTMDTFIQSSWYFLRYSTPRKLWEKQAFDKESLTYWLNVDEYIGGIEHAILHLLYARFWTKVLRDLGYIEIDEPFANLLTQGMVLKDGAKMSKSKGNIVNPNELIAHYGADTARLFVLFAAPPTRELEWNDKAVEGAHRFLKRLWERAEHIESCTQKPHINHKTLQKNEQYARQKVYEALQKSNEIFSKKQSGYAFNTLIAASMEAFNALNEQENPLVWTEGYFVLLHILEPIVPHICWELSEQYFRRCNFAPLSVDKDALTKESVIYAITINGKKRAEVEMPLGLSKEEIIIQAKESVPKWLEGVEILKEIIVPNKLVNLVVK</sequence>
<reference key="1">
    <citation type="journal article" date="2003" name="Proc. Natl. Acad. Sci. U.S.A.">
        <title>The complete genome sequence of the carcinogenic bacterium Helicobacter hepaticus.</title>
        <authorList>
            <person name="Suerbaum S."/>
            <person name="Josenhans C."/>
            <person name="Sterzenbach T."/>
            <person name="Drescher B."/>
            <person name="Brandt P."/>
            <person name="Bell M."/>
            <person name="Droege M."/>
            <person name="Fartmann B."/>
            <person name="Fischer H.-P."/>
            <person name="Ge Z."/>
            <person name="Hoerster A."/>
            <person name="Holland R."/>
            <person name="Klein K."/>
            <person name="Koenig J."/>
            <person name="Macko L."/>
            <person name="Mendz G.L."/>
            <person name="Nyakatura G."/>
            <person name="Schauer D.B."/>
            <person name="Shen Z."/>
            <person name="Weber J."/>
            <person name="Frosch M."/>
            <person name="Fox J.G."/>
        </authorList>
    </citation>
    <scope>NUCLEOTIDE SEQUENCE [LARGE SCALE GENOMIC DNA]</scope>
    <source>
        <strain>ATCC 51449 / 3B1</strain>
    </source>
</reference>
<comment type="catalytic activity">
    <reaction evidence="1">
        <text>tRNA(Leu) + L-leucine + ATP = L-leucyl-tRNA(Leu) + AMP + diphosphate</text>
        <dbReference type="Rhea" id="RHEA:11688"/>
        <dbReference type="Rhea" id="RHEA-COMP:9613"/>
        <dbReference type="Rhea" id="RHEA-COMP:9622"/>
        <dbReference type="ChEBI" id="CHEBI:30616"/>
        <dbReference type="ChEBI" id="CHEBI:33019"/>
        <dbReference type="ChEBI" id="CHEBI:57427"/>
        <dbReference type="ChEBI" id="CHEBI:78442"/>
        <dbReference type="ChEBI" id="CHEBI:78494"/>
        <dbReference type="ChEBI" id="CHEBI:456215"/>
        <dbReference type="EC" id="6.1.1.4"/>
    </reaction>
</comment>
<comment type="subcellular location">
    <subcellularLocation>
        <location evidence="1">Cytoplasm</location>
    </subcellularLocation>
</comment>
<comment type="similarity">
    <text evidence="1">Belongs to the class-I aminoacyl-tRNA synthetase family.</text>
</comment>
<protein>
    <recommendedName>
        <fullName evidence="1">Leucine--tRNA ligase</fullName>
        <ecNumber evidence="1">6.1.1.4</ecNumber>
    </recommendedName>
    <alternativeName>
        <fullName evidence="1">Leucyl-tRNA synthetase</fullName>
        <shortName evidence="1">LeuRS</shortName>
    </alternativeName>
</protein>
<keyword id="KW-0030">Aminoacyl-tRNA synthetase</keyword>
<keyword id="KW-0067">ATP-binding</keyword>
<keyword id="KW-0963">Cytoplasm</keyword>
<keyword id="KW-0436">Ligase</keyword>
<keyword id="KW-0547">Nucleotide-binding</keyword>
<keyword id="KW-0648">Protein biosynthesis</keyword>
<keyword id="KW-1185">Reference proteome</keyword>
<feature type="chain" id="PRO_0000152025" description="Leucine--tRNA ligase">
    <location>
        <begin position="1"/>
        <end position="830"/>
    </location>
</feature>
<feature type="short sequence motif" description="'HIGH' region">
    <location>
        <begin position="48"/>
        <end position="58"/>
    </location>
</feature>
<feature type="short sequence motif" description="'KMSKS' region">
    <location>
        <begin position="596"/>
        <end position="600"/>
    </location>
</feature>
<feature type="binding site" evidence="1">
    <location>
        <position position="599"/>
    </location>
    <ligand>
        <name>ATP</name>
        <dbReference type="ChEBI" id="CHEBI:30616"/>
    </ligand>
</feature>